<gene>
    <name evidence="1" type="primary">atpF1</name>
    <name type="ordered locus">Jann_0770</name>
</gene>
<name>ATPF1_JANSC</name>
<sequence length="190" mass="20252">MRYLTALFVLVASPALAAGDDAPKGLFNPSLGNTDFVVLLGFLLFLAILFYFGVPKMLGGMLDARAEGIRSELDEARALREEAQTLLASYERKAREVEEQSARIVTEARANAETAAEQAKADIERSITRRLAAAEDQIASAEAKASRAVRDTAASVAVAAAAEVIAGGTSATDQNKMIDEAIEEVGRQLH</sequence>
<protein>
    <recommendedName>
        <fullName evidence="1">ATP synthase subunit b 1</fullName>
    </recommendedName>
    <alternativeName>
        <fullName evidence="1">ATP synthase F(0) sector subunit b 1</fullName>
    </alternativeName>
    <alternativeName>
        <fullName evidence="1">ATPase subunit I 1</fullName>
    </alternativeName>
    <alternativeName>
        <fullName evidence="1">F-type ATPase subunit b 1</fullName>
        <shortName evidence="1">F-ATPase subunit b 1</shortName>
    </alternativeName>
</protein>
<proteinExistence type="inferred from homology"/>
<dbReference type="EMBL" id="CP000264">
    <property type="protein sequence ID" value="ABD53687.1"/>
    <property type="molecule type" value="Genomic_DNA"/>
</dbReference>
<dbReference type="RefSeq" id="WP_011453895.1">
    <property type="nucleotide sequence ID" value="NC_007802.1"/>
</dbReference>
<dbReference type="SMR" id="Q28UC5"/>
<dbReference type="STRING" id="290400.Jann_0770"/>
<dbReference type="KEGG" id="jan:Jann_0770"/>
<dbReference type="eggNOG" id="COG0711">
    <property type="taxonomic scope" value="Bacteria"/>
</dbReference>
<dbReference type="HOGENOM" id="CLU_079215_6_2_5"/>
<dbReference type="OrthoDB" id="8479836at2"/>
<dbReference type="Proteomes" id="UP000008326">
    <property type="component" value="Chromosome"/>
</dbReference>
<dbReference type="GO" id="GO:0005886">
    <property type="term" value="C:plasma membrane"/>
    <property type="evidence" value="ECO:0007669"/>
    <property type="project" value="UniProtKB-SubCell"/>
</dbReference>
<dbReference type="GO" id="GO:0045259">
    <property type="term" value="C:proton-transporting ATP synthase complex"/>
    <property type="evidence" value="ECO:0007669"/>
    <property type="project" value="UniProtKB-KW"/>
</dbReference>
<dbReference type="GO" id="GO:0046933">
    <property type="term" value="F:proton-transporting ATP synthase activity, rotational mechanism"/>
    <property type="evidence" value="ECO:0007669"/>
    <property type="project" value="UniProtKB-UniRule"/>
</dbReference>
<dbReference type="GO" id="GO:0046961">
    <property type="term" value="F:proton-transporting ATPase activity, rotational mechanism"/>
    <property type="evidence" value="ECO:0007669"/>
    <property type="project" value="TreeGrafter"/>
</dbReference>
<dbReference type="CDD" id="cd06503">
    <property type="entry name" value="ATP-synt_Fo_b"/>
    <property type="match status" value="1"/>
</dbReference>
<dbReference type="HAMAP" id="MF_01398">
    <property type="entry name" value="ATP_synth_b_bprime"/>
    <property type="match status" value="1"/>
</dbReference>
<dbReference type="InterPro" id="IPR002146">
    <property type="entry name" value="ATP_synth_b/b'su_bac/chlpt"/>
</dbReference>
<dbReference type="InterPro" id="IPR050059">
    <property type="entry name" value="ATP_synthase_B_chain"/>
</dbReference>
<dbReference type="NCBIfam" id="NF009989">
    <property type="entry name" value="PRK13455.1"/>
    <property type="match status" value="1"/>
</dbReference>
<dbReference type="PANTHER" id="PTHR33445:SF1">
    <property type="entry name" value="ATP SYNTHASE SUBUNIT B"/>
    <property type="match status" value="1"/>
</dbReference>
<dbReference type="PANTHER" id="PTHR33445">
    <property type="entry name" value="ATP SYNTHASE SUBUNIT B', CHLOROPLASTIC"/>
    <property type="match status" value="1"/>
</dbReference>
<dbReference type="Pfam" id="PF00430">
    <property type="entry name" value="ATP-synt_B"/>
    <property type="match status" value="1"/>
</dbReference>
<feature type="chain" id="PRO_0000368531" description="ATP synthase subunit b 1">
    <location>
        <begin position="1"/>
        <end position="190"/>
    </location>
</feature>
<feature type="transmembrane region" description="Helical" evidence="1">
    <location>
        <begin position="35"/>
        <end position="55"/>
    </location>
</feature>
<keyword id="KW-0066">ATP synthesis</keyword>
<keyword id="KW-0997">Cell inner membrane</keyword>
<keyword id="KW-1003">Cell membrane</keyword>
<keyword id="KW-0138">CF(0)</keyword>
<keyword id="KW-0375">Hydrogen ion transport</keyword>
<keyword id="KW-0406">Ion transport</keyword>
<keyword id="KW-0472">Membrane</keyword>
<keyword id="KW-1185">Reference proteome</keyword>
<keyword id="KW-0812">Transmembrane</keyword>
<keyword id="KW-1133">Transmembrane helix</keyword>
<keyword id="KW-0813">Transport</keyword>
<organism>
    <name type="scientific">Jannaschia sp. (strain CCS1)</name>
    <dbReference type="NCBI Taxonomy" id="290400"/>
    <lineage>
        <taxon>Bacteria</taxon>
        <taxon>Pseudomonadati</taxon>
        <taxon>Pseudomonadota</taxon>
        <taxon>Alphaproteobacteria</taxon>
        <taxon>Rhodobacterales</taxon>
        <taxon>Roseobacteraceae</taxon>
        <taxon>Jannaschia</taxon>
    </lineage>
</organism>
<accession>Q28UC5</accession>
<evidence type="ECO:0000255" key="1">
    <source>
        <dbReference type="HAMAP-Rule" id="MF_01398"/>
    </source>
</evidence>
<comment type="function">
    <text evidence="1">F(1)F(0) ATP synthase produces ATP from ADP in the presence of a proton or sodium gradient. F-type ATPases consist of two structural domains, F(1) containing the extramembraneous catalytic core and F(0) containing the membrane proton channel, linked together by a central stalk and a peripheral stalk. During catalysis, ATP synthesis in the catalytic domain of F(1) is coupled via a rotary mechanism of the central stalk subunits to proton translocation.</text>
</comment>
<comment type="function">
    <text evidence="1">Component of the F(0) channel, it forms part of the peripheral stalk, linking F(1) to F(0).</text>
</comment>
<comment type="subunit">
    <text evidence="1">F-type ATPases have 2 components, F(1) - the catalytic core - and F(0) - the membrane proton channel. F(1) has five subunits: alpha(3), beta(3), gamma(1), delta(1), epsilon(1). F(0) has three main subunits: a(1), b(2) and c(10-14). The alpha and beta chains form an alternating ring which encloses part of the gamma chain. F(1) is attached to F(0) by a central stalk formed by the gamma and epsilon chains, while a peripheral stalk is formed by the delta and b chains.</text>
</comment>
<comment type="subcellular location">
    <subcellularLocation>
        <location evidence="1">Cell inner membrane</location>
        <topology evidence="1">Single-pass membrane protein</topology>
    </subcellularLocation>
</comment>
<comment type="similarity">
    <text evidence="1">Belongs to the ATPase B chain family.</text>
</comment>
<reference key="1">
    <citation type="submission" date="2006-02" db="EMBL/GenBank/DDBJ databases">
        <title>Complete sequence of chromosome of Jannaschia sp. CCS1.</title>
        <authorList>
            <consortium name="US DOE Joint Genome Institute"/>
            <person name="Copeland A."/>
            <person name="Lucas S."/>
            <person name="Lapidus A."/>
            <person name="Barry K."/>
            <person name="Detter J.C."/>
            <person name="Glavina del Rio T."/>
            <person name="Hammon N."/>
            <person name="Israni S."/>
            <person name="Pitluck S."/>
            <person name="Brettin T."/>
            <person name="Bruce D."/>
            <person name="Han C."/>
            <person name="Tapia R."/>
            <person name="Gilna P."/>
            <person name="Chertkov O."/>
            <person name="Saunders E."/>
            <person name="Schmutz J."/>
            <person name="Larimer F."/>
            <person name="Land M."/>
            <person name="Kyrpides N."/>
            <person name="Lykidis A."/>
            <person name="Moran M.A."/>
            <person name="Belas R."/>
            <person name="Ye W."/>
            <person name="Buchan A."/>
            <person name="Gonzalez J.M."/>
            <person name="Schell M.A."/>
            <person name="Richardson P."/>
        </authorList>
    </citation>
    <scope>NUCLEOTIDE SEQUENCE [LARGE SCALE GENOMIC DNA]</scope>
    <source>
        <strain>CCS1</strain>
    </source>
</reference>